<name>HIS7_SYNP6</name>
<keyword id="KW-0028">Amino-acid biosynthesis</keyword>
<keyword id="KW-0963">Cytoplasm</keyword>
<keyword id="KW-0368">Histidine biosynthesis</keyword>
<keyword id="KW-0456">Lyase</keyword>
<dbReference type="EC" id="4.2.1.19" evidence="1"/>
<dbReference type="EMBL" id="AP008231">
    <property type="protein sequence ID" value="BAD79569.1"/>
    <property type="molecule type" value="Genomic_DNA"/>
</dbReference>
<dbReference type="RefSeq" id="WP_011243691.1">
    <property type="nucleotide sequence ID" value="NZ_CP085785.1"/>
</dbReference>
<dbReference type="SMR" id="Q5N2A1"/>
<dbReference type="GeneID" id="72428937"/>
<dbReference type="KEGG" id="syc:syc1379_d"/>
<dbReference type="eggNOG" id="COG0131">
    <property type="taxonomic scope" value="Bacteria"/>
</dbReference>
<dbReference type="UniPathway" id="UPA00031">
    <property type="reaction ID" value="UER00011"/>
</dbReference>
<dbReference type="Proteomes" id="UP000001175">
    <property type="component" value="Chromosome"/>
</dbReference>
<dbReference type="GO" id="GO:0005737">
    <property type="term" value="C:cytoplasm"/>
    <property type="evidence" value="ECO:0007669"/>
    <property type="project" value="UniProtKB-SubCell"/>
</dbReference>
<dbReference type="GO" id="GO:0004424">
    <property type="term" value="F:imidazoleglycerol-phosphate dehydratase activity"/>
    <property type="evidence" value="ECO:0007669"/>
    <property type="project" value="UniProtKB-UniRule"/>
</dbReference>
<dbReference type="GO" id="GO:0000105">
    <property type="term" value="P:L-histidine biosynthetic process"/>
    <property type="evidence" value="ECO:0007669"/>
    <property type="project" value="UniProtKB-UniRule"/>
</dbReference>
<dbReference type="CDD" id="cd07914">
    <property type="entry name" value="IGPD"/>
    <property type="match status" value="1"/>
</dbReference>
<dbReference type="FunFam" id="3.30.230.40:FF:000002">
    <property type="entry name" value="Imidazoleglycerol-phosphate dehydratase"/>
    <property type="match status" value="1"/>
</dbReference>
<dbReference type="FunFam" id="3.30.230.40:FF:000003">
    <property type="entry name" value="Imidazoleglycerol-phosphate dehydratase HisB"/>
    <property type="match status" value="1"/>
</dbReference>
<dbReference type="Gene3D" id="3.30.230.40">
    <property type="entry name" value="Imidazole glycerol phosphate dehydratase, domain 1"/>
    <property type="match status" value="2"/>
</dbReference>
<dbReference type="HAMAP" id="MF_00076">
    <property type="entry name" value="HisB"/>
    <property type="match status" value="1"/>
</dbReference>
<dbReference type="InterPro" id="IPR038494">
    <property type="entry name" value="IGPD_sf"/>
</dbReference>
<dbReference type="InterPro" id="IPR000807">
    <property type="entry name" value="ImidazoleglycerolP_deHydtase"/>
</dbReference>
<dbReference type="InterPro" id="IPR020565">
    <property type="entry name" value="ImidazoleglycerP_deHydtase_CS"/>
</dbReference>
<dbReference type="InterPro" id="IPR020568">
    <property type="entry name" value="Ribosomal_Su5_D2-typ_SF"/>
</dbReference>
<dbReference type="NCBIfam" id="NF002108">
    <property type="entry name" value="PRK00951.1-3"/>
    <property type="match status" value="1"/>
</dbReference>
<dbReference type="NCBIfam" id="NF002111">
    <property type="entry name" value="PRK00951.2-1"/>
    <property type="match status" value="1"/>
</dbReference>
<dbReference type="NCBIfam" id="NF002114">
    <property type="entry name" value="PRK00951.2-4"/>
    <property type="match status" value="1"/>
</dbReference>
<dbReference type="PANTHER" id="PTHR23133:SF2">
    <property type="entry name" value="IMIDAZOLEGLYCEROL-PHOSPHATE DEHYDRATASE"/>
    <property type="match status" value="1"/>
</dbReference>
<dbReference type="PANTHER" id="PTHR23133">
    <property type="entry name" value="IMIDAZOLEGLYCEROL-PHOSPHATE DEHYDRATASE HIS7"/>
    <property type="match status" value="1"/>
</dbReference>
<dbReference type="Pfam" id="PF00475">
    <property type="entry name" value="IGPD"/>
    <property type="match status" value="1"/>
</dbReference>
<dbReference type="SUPFAM" id="SSF54211">
    <property type="entry name" value="Ribosomal protein S5 domain 2-like"/>
    <property type="match status" value="2"/>
</dbReference>
<dbReference type="PROSITE" id="PS00954">
    <property type="entry name" value="IGP_DEHYDRATASE_1"/>
    <property type="match status" value="1"/>
</dbReference>
<dbReference type="PROSITE" id="PS00955">
    <property type="entry name" value="IGP_DEHYDRATASE_2"/>
    <property type="match status" value="1"/>
</dbReference>
<reference key="1">
    <citation type="journal article" date="2007" name="Photosyn. Res.">
        <title>Complete nucleotide sequence of the freshwater unicellular cyanobacterium Synechococcus elongatus PCC 6301 chromosome: gene content and organization.</title>
        <authorList>
            <person name="Sugita C."/>
            <person name="Ogata K."/>
            <person name="Shikata M."/>
            <person name="Jikuya H."/>
            <person name="Takano J."/>
            <person name="Furumichi M."/>
            <person name="Kanehisa M."/>
            <person name="Omata T."/>
            <person name="Sugiura M."/>
            <person name="Sugita M."/>
        </authorList>
    </citation>
    <scope>NUCLEOTIDE SEQUENCE [LARGE SCALE GENOMIC DNA]</scope>
    <source>
        <strain>ATCC 27144 / PCC 6301 / SAUG 1402/1</strain>
    </source>
</reference>
<gene>
    <name evidence="1" type="primary">hisB</name>
    <name type="ordered locus">syc1379_d</name>
</gene>
<sequence length="209" mass="22873">MQLSDRPLTAPGTAPRQATVSRRTGETDVQVFLNLDGTGRCQADTGIPFLDHMFDQIASHGLIDLEITAKGDLHIDDHHTNEDVGITFGLALAEALGDRKGIVRFGHFVAPLDEALVQVALDFSGRPHLTYGLTLPTERVGTYETQLVREFFVAIANNAKLTLHLRQLDGINSHHIIEATFKAFARSLRMATEVDPRRAGQIPSSKGVL</sequence>
<protein>
    <recommendedName>
        <fullName evidence="1">Imidazoleglycerol-phosphate dehydratase</fullName>
        <shortName evidence="1">IGPD</shortName>
        <ecNumber evidence="1">4.2.1.19</ecNumber>
    </recommendedName>
</protein>
<proteinExistence type="inferred from homology"/>
<feature type="chain" id="PRO_0000336346" description="Imidazoleglycerol-phosphate dehydratase">
    <location>
        <begin position="1"/>
        <end position="209"/>
    </location>
</feature>
<feature type="region of interest" description="Disordered" evidence="2">
    <location>
        <begin position="1"/>
        <end position="23"/>
    </location>
</feature>
<evidence type="ECO:0000255" key="1">
    <source>
        <dbReference type="HAMAP-Rule" id="MF_00076"/>
    </source>
</evidence>
<evidence type="ECO:0000256" key="2">
    <source>
        <dbReference type="SAM" id="MobiDB-lite"/>
    </source>
</evidence>
<accession>Q5N2A1</accession>
<organism>
    <name type="scientific">Synechococcus sp. (strain ATCC 27144 / PCC 6301 / SAUG 1402/1)</name>
    <name type="common">Anacystis nidulans</name>
    <dbReference type="NCBI Taxonomy" id="269084"/>
    <lineage>
        <taxon>Bacteria</taxon>
        <taxon>Bacillati</taxon>
        <taxon>Cyanobacteriota</taxon>
        <taxon>Cyanophyceae</taxon>
        <taxon>Synechococcales</taxon>
        <taxon>Synechococcaceae</taxon>
        <taxon>Synechococcus</taxon>
    </lineage>
</organism>
<comment type="catalytic activity">
    <reaction evidence="1">
        <text>D-erythro-1-(imidazol-4-yl)glycerol 3-phosphate = 3-(imidazol-4-yl)-2-oxopropyl phosphate + H2O</text>
        <dbReference type="Rhea" id="RHEA:11040"/>
        <dbReference type="ChEBI" id="CHEBI:15377"/>
        <dbReference type="ChEBI" id="CHEBI:57766"/>
        <dbReference type="ChEBI" id="CHEBI:58278"/>
        <dbReference type="EC" id="4.2.1.19"/>
    </reaction>
</comment>
<comment type="pathway">
    <text evidence="1">Amino-acid biosynthesis; L-histidine biosynthesis; L-histidine from 5-phospho-alpha-D-ribose 1-diphosphate: step 6/9.</text>
</comment>
<comment type="subcellular location">
    <subcellularLocation>
        <location evidence="1">Cytoplasm</location>
    </subcellularLocation>
</comment>
<comment type="similarity">
    <text evidence="1">Belongs to the imidazoleglycerol-phosphate dehydratase family.</text>
</comment>